<comment type="function">
    <text>Ferredoxins are iron-sulfur proteins that transfer electrons in a wide variety of metabolic reactions.</text>
</comment>
<comment type="cofactor">
    <cofactor>
        <name>[2Fe-2S] cluster</name>
        <dbReference type="ChEBI" id="CHEBI:190135"/>
    </cofactor>
    <text>Binds 1 [2Fe-2S] cluster.</text>
</comment>
<comment type="subcellular location">
    <subcellularLocation>
        <location>Plastid</location>
        <location>Chloroplast</location>
    </subcellularLocation>
</comment>
<comment type="similarity">
    <text evidence="2">Belongs to the 2Fe2S plant-type ferredoxin family.</text>
</comment>
<name>FER1_EQUTE</name>
<feature type="chain" id="PRO_0000189330" description="Ferredoxin-1">
    <location>
        <begin position="1"/>
        <end position="95"/>
    </location>
</feature>
<feature type="domain" description="2Fe-2S ferredoxin-type" evidence="1">
    <location>
        <begin position="2"/>
        <end position="92"/>
    </location>
</feature>
<feature type="binding site" evidence="1">
    <location>
        <position position="38"/>
    </location>
    <ligand>
        <name>[2Fe-2S] cluster</name>
        <dbReference type="ChEBI" id="CHEBI:190135"/>
    </ligand>
</feature>
<feature type="binding site" evidence="1">
    <location>
        <position position="43"/>
    </location>
    <ligand>
        <name>[2Fe-2S] cluster</name>
        <dbReference type="ChEBI" id="CHEBI:190135"/>
    </ligand>
</feature>
<feature type="binding site" evidence="1">
    <location>
        <position position="46"/>
    </location>
    <ligand>
        <name>[2Fe-2S] cluster</name>
        <dbReference type="ChEBI" id="CHEBI:190135"/>
    </ligand>
</feature>
<feature type="binding site" evidence="1">
    <location>
        <position position="76"/>
    </location>
    <ligand>
        <name>[2Fe-2S] cluster</name>
        <dbReference type="ChEBI" id="CHEBI:190135"/>
    </ligand>
</feature>
<organism>
    <name type="scientific">Equisetum telmateia</name>
    <name type="common">Great horsetail</name>
    <name type="synonym">Equisetum majus</name>
    <dbReference type="NCBI Taxonomy" id="3260"/>
    <lineage>
        <taxon>Eukaryota</taxon>
        <taxon>Viridiplantae</taxon>
        <taxon>Streptophyta</taxon>
        <taxon>Embryophyta</taxon>
        <taxon>Tracheophyta</taxon>
        <taxon>Polypodiopsida</taxon>
        <taxon>Equisetidae</taxon>
        <taxon>Equisetales</taxon>
        <taxon>Equisetaceae</taxon>
        <taxon>Equisetum</taxon>
    </lineage>
</organism>
<proteinExistence type="evidence at protein level"/>
<accession>P00234</accession>
<sequence>AYKTVLKTPSGEFTLDVPEGTTILDAAEEAGYDLPFSCRAGACSSCLGKVVSGSVDQSEGSFLDDGQMEEGFVLTCIAIPESDLVIETHKEEELF</sequence>
<protein>
    <recommendedName>
        <fullName>Ferredoxin-1</fullName>
    </recommendedName>
    <alternativeName>
        <fullName>Ferredoxin I</fullName>
    </alternativeName>
</protein>
<evidence type="ECO:0000255" key="1">
    <source>
        <dbReference type="PROSITE-ProRule" id="PRU00465"/>
    </source>
</evidence>
<evidence type="ECO:0000305" key="2"/>
<reference key="1">
    <citation type="journal article" date="1977" name="J. Biochem.">
        <title>Horsetail (Equisetum telmateia) ferredoxins I and II. Amino acid sequences.</title>
        <authorList>
            <person name="Hase T."/>
            <person name="Wada K."/>
            <person name="Matsubara H."/>
        </authorList>
    </citation>
    <scope>PROTEIN SEQUENCE</scope>
</reference>
<keyword id="KW-0001">2Fe-2S</keyword>
<keyword id="KW-0150">Chloroplast</keyword>
<keyword id="KW-0903">Direct protein sequencing</keyword>
<keyword id="KW-0249">Electron transport</keyword>
<keyword id="KW-0408">Iron</keyword>
<keyword id="KW-0411">Iron-sulfur</keyword>
<keyword id="KW-0479">Metal-binding</keyword>
<keyword id="KW-0934">Plastid</keyword>
<keyword id="KW-0813">Transport</keyword>
<dbReference type="PIR" id="A00240">
    <property type="entry name" value="FEEQ1"/>
</dbReference>
<dbReference type="SMR" id="P00234"/>
<dbReference type="GO" id="GO:0009507">
    <property type="term" value="C:chloroplast"/>
    <property type="evidence" value="ECO:0007669"/>
    <property type="project" value="UniProtKB-SubCell"/>
</dbReference>
<dbReference type="GO" id="GO:0051537">
    <property type="term" value="F:2 iron, 2 sulfur cluster binding"/>
    <property type="evidence" value="ECO:0007669"/>
    <property type="project" value="UniProtKB-KW"/>
</dbReference>
<dbReference type="GO" id="GO:0009055">
    <property type="term" value="F:electron transfer activity"/>
    <property type="evidence" value="ECO:0007669"/>
    <property type="project" value="InterPro"/>
</dbReference>
<dbReference type="GO" id="GO:0046872">
    <property type="term" value="F:metal ion binding"/>
    <property type="evidence" value="ECO:0007669"/>
    <property type="project" value="UniProtKB-KW"/>
</dbReference>
<dbReference type="GO" id="GO:0022900">
    <property type="term" value="P:electron transport chain"/>
    <property type="evidence" value="ECO:0007669"/>
    <property type="project" value="InterPro"/>
</dbReference>
<dbReference type="CDD" id="cd00207">
    <property type="entry name" value="fer2"/>
    <property type="match status" value="1"/>
</dbReference>
<dbReference type="FunFam" id="3.10.20.30:FF:000014">
    <property type="entry name" value="Ferredoxin"/>
    <property type="match status" value="1"/>
</dbReference>
<dbReference type="Gene3D" id="3.10.20.30">
    <property type="match status" value="1"/>
</dbReference>
<dbReference type="InterPro" id="IPR036010">
    <property type="entry name" value="2Fe-2S_ferredoxin-like_sf"/>
</dbReference>
<dbReference type="InterPro" id="IPR001041">
    <property type="entry name" value="2Fe-2S_ferredoxin-type"/>
</dbReference>
<dbReference type="InterPro" id="IPR006058">
    <property type="entry name" value="2Fe2S_fd_BS"/>
</dbReference>
<dbReference type="InterPro" id="IPR012675">
    <property type="entry name" value="Beta-grasp_dom_sf"/>
</dbReference>
<dbReference type="InterPro" id="IPR010241">
    <property type="entry name" value="Fd_pln"/>
</dbReference>
<dbReference type="NCBIfam" id="TIGR02008">
    <property type="entry name" value="fdx_plant"/>
    <property type="match status" value="1"/>
</dbReference>
<dbReference type="PANTHER" id="PTHR43112">
    <property type="entry name" value="FERREDOXIN"/>
    <property type="match status" value="1"/>
</dbReference>
<dbReference type="PANTHER" id="PTHR43112:SF3">
    <property type="entry name" value="FERREDOXIN-2, CHLOROPLASTIC"/>
    <property type="match status" value="1"/>
</dbReference>
<dbReference type="Pfam" id="PF00111">
    <property type="entry name" value="Fer2"/>
    <property type="match status" value="1"/>
</dbReference>
<dbReference type="SUPFAM" id="SSF54292">
    <property type="entry name" value="2Fe-2S ferredoxin-like"/>
    <property type="match status" value="1"/>
</dbReference>
<dbReference type="PROSITE" id="PS00197">
    <property type="entry name" value="2FE2S_FER_1"/>
    <property type="match status" value="1"/>
</dbReference>
<dbReference type="PROSITE" id="PS51085">
    <property type="entry name" value="2FE2S_FER_2"/>
    <property type="match status" value="1"/>
</dbReference>